<organism>
    <name type="scientific">Mycobacterium leprae (strain Br4923)</name>
    <dbReference type="NCBI Taxonomy" id="561304"/>
    <lineage>
        <taxon>Bacteria</taxon>
        <taxon>Bacillati</taxon>
        <taxon>Actinomycetota</taxon>
        <taxon>Actinomycetes</taxon>
        <taxon>Mycobacteriales</taxon>
        <taxon>Mycobacteriaceae</taxon>
        <taxon>Mycobacterium</taxon>
    </lineage>
</organism>
<protein>
    <recommendedName>
        <fullName evidence="1">Large ribosomal subunit protein bL9</fullName>
    </recommendedName>
    <alternativeName>
        <fullName evidence="2">50S ribosomal protein L9</fullName>
    </alternativeName>
</protein>
<comment type="function">
    <text evidence="1">Binds to the 23S rRNA.</text>
</comment>
<comment type="similarity">
    <text evidence="1">Belongs to the bacterial ribosomal protein bL9 family.</text>
</comment>
<proteinExistence type="inferred from homology"/>
<dbReference type="EMBL" id="FM211192">
    <property type="protein sequence ID" value="CAR72782.1"/>
    <property type="molecule type" value="Genomic_DNA"/>
</dbReference>
<dbReference type="SMR" id="B8ZTL4"/>
<dbReference type="KEGG" id="mlb:MLBr02682"/>
<dbReference type="HOGENOM" id="CLU_078938_5_1_11"/>
<dbReference type="Proteomes" id="UP000006900">
    <property type="component" value="Chromosome"/>
</dbReference>
<dbReference type="GO" id="GO:1990904">
    <property type="term" value="C:ribonucleoprotein complex"/>
    <property type="evidence" value="ECO:0007669"/>
    <property type="project" value="UniProtKB-KW"/>
</dbReference>
<dbReference type="GO" id="GO:0005840">
    <property type="term" value="C:ribosome"/>
    <property type="evidence" value="ECO:0007669"/>
    <property type="project" value="UniProtKB-KW"/>
</dbReference>
<dbReference type="GO" id="GO:0019843">
    <property type="term" value="F:rRNA binding"/>
    <property type="evidence" value="ECO:0007669"/>
    <property type="project" value="UniProtKB-UniRule"/>
</dbReference>
<dbReference type="GO" id="GO:0003735">
    <property type="term" value="F:structural constituent of ribosome"/>
    <property type="evidence" value="ECO:0007669"/>
    <property type="project" value="InterPro"/>
</dbReference>
<dbReference type="GO" id="GO:0006412">
    <property type="term" value="P:translation"/>
    <property type="evidence" value="ECO:0007669"/>
    <property type="project" value="UniProtKB-UniRule"/>
</dbReference>
<dbReference type="FunFam" id="3.40.5.10:FF:000003">
    <property type="entry name" value="50S ribosomal protein L9"/>
    <property type="match status" value="1"/>
</dbReference>
<dbReference type="Gene3D" id="3.10.430.100">
    <property type="entry name" value="Ribosomal protein L9, C-terminal domain"/>
    <property type="match status" value="1"/>
</dbReference>
<dbReference type="Gene3D" id="3.40.5.10">
    <property type="entry name" value="Ribosomal protein L9, N-terminal domain"/>
    <property type="match status" value="1"/>
</dbReference>
<dbReference type="HAMAP" id="MF_00503">
    <property type="entry name" value="Ribosomal_bL9"/>
    <property type="match status" value="1"/>
</dbReference>
<dbReference type="InterPro" id="IPR000244">
    <property type="entry name" value="Ribosomal_bL9"/>
</dbReference>
<dbReference type="InterPro" id="IPR009027">
    <property type="entry name" value="Ribosomal_bL9/RNase_H1_N"/>
</dbReference>
<dbReference type="InterPro" id="IPR020594">
    <property type="entry name" value="Ribosomal_bL9_bac/chp"/>
</dbReference>
<dbReference type="InterPro" id="IPR020069">
    <property type="entry name" value="Ribosomal_bL9_C"/>
</dbReference>
<dbReference type="InterPro" id="IPR036791">
    <property type="entry name" value="Ribosomal_bL9_C_sf"/>
</dbReference>
<dbReference type="InterPro" id="IPR020070">
    <property type="entry name" value="Ribosomal_bL9_N"/>
</dbReference>
<dbReference type="InterPro" id="IPR036935">
    <property type="entry name" value="Ribosomal_bL9_N_sf"/>
</dbReference>
<dbReference type="NCBIfam" id="TIGR00158">
    <property type="entry name" value="L9"/>
    <property type="match status" value="1"/>
</dbReference>
<dbReference type="PANTHER" id="PTHR21368">
    <property type="entry name" value="50S RIBOSOMAL PROTEIN L9"/>
    <property type="match status" value="1"/>
</dbReference>
<dbReference type="Pfam" id="PF03948">
    <property type="entry name" value="Ribosomal_L9_C"/>
    <property type="match status" value="1"/>
</dbReference>
<dbReference type="Pfam" id="PF01281">
    <property type="entry name" value="Ribosomal_L9_N"/>
    <property type="match status" value="1"/>
</dbReference>
<dbReference type="SUPFAM" id="SSF55658">
    <property type="entry name" value="L9 N-domain-like"/>
    <property type="match status" value="1"/>
</dbReference>
<dbReference type="SUPFAM" id="SSF55653">
    <property type="entry name" value="Ribosomal protein L9 C-domain"/>
    <property type="match status" value="1"/>
</dbReference>
<dbReference type="PROSITE" id="PS00651">
    <property type="entry name" value="RIBOSOMAL_L9"/>
    <property type="match status" value="1"/>
</dbReference>
<evidence type="ECO:0000255" key="1">
    <source>
        <dbReference type="HAMAP-Rule" id="MF_00503"/>
    </source>
</evidence>
<evidence type="ECO:0000305" key="2"/>
<keyword id="KW-0687">Ribonucleoprotein</keyword>
<keyword id="KW-0689">Ribosomal protein</keyword>
<keyword id="KW-0694">RNA-binding</keyword>
<keyword id="KW-0699">rRNA-binding</keyword>
<sequence length="152" mass="16218">MKLILTADVDHLGSVGDTVEVKDGYGRNFLLPHGLAIVASRGAQRQADEIRRARETKAMRDREHANEIKVAIEALGSVSLPMKTVADSGKLFGSVTAGDVVAAIKKAGGPNLDKRIVRLPKTHIKAVGTHPVSVHLHPEVDVVVLLDVVAAR</sequence>
<reference key="1">
    <citation type="journal article" date="2009" name="Nat. Genet.">
        <title>Comparative genomic and phylogeographic analysis of Mycobacterium leprae.</title>
        <authorList>
            <person name="Monot M."/>
            <person name="Honore N."/>
            <person name="Garnier T."/>
            <person name="Zidane N."/>
            <person name="Sherafi D."/>
            <person name="Paniz-Mondolfi A."/>
            <person name="Matsuoka M."/>
            <person name="Taylor G.M."/>
            <person name="Donoghue H.D."/>
            <person name="Bouwman A."/>
            <person name="Mays S."/>
            <person name="Watson C."/>
            <person name="Lockwood D."/>
            <person name="Khamispour A."/>
            <person name="Dowlati Y."/>
            <person name="Jianping S."/>
            <person name="Rea T.H."/>
            <person name="Vera-Cabrera L."/>
            <person name="Stefani M.M."/>
            <person name="Banu S."/>
            <person name="Macdonald M."/>
            <person name="Sapkota B.R."/>
            <person name="Spencer J.S."/>
            <person name="Thomas J."/>
            <person name="Harshman K."/>
            <person name="Singh P."/>
            <person name="Busso P."/>
            <person name="Gattiker A."/>
            <person name="Rougemont J."/>
            <person name="Brennan P.J."/>
            <person name="Cole S.T."/>
        </authorList>
    </citation>
    <scope>NUCLEOTIDE SEQUENCE [LARGE SCALE GENOMIC DNA]</scope>
    <source>
        <strain>Br4923</strain>
    </source>
</reference>
<feature type="chain" id="PRO_1000196256" description="Large ribosomal subunit protein bL9">
    <location>
        <begin position="1"/>
        <end position="152"/>
    </location>
</feature>
<accession>B8ZTL4</accession>
<gene>
    <name evidence="1" type="primary">rplI</name>
    <name type="ordered locus">MLBr02682</name>
</gene>
<name>RL9_MYCLB</name>